<feature type="initiator methionine" description="Removed" evidence="10">
    <location>
        <position position="1"/>
    </location>
</feature>
<feature type="chain" id="PRO_0000169321" description="CRISPR system Cascade subunit CasE">
    <location>
        <begin position="2"/>
        <end position="199"/>
    </location>
</feature>
<feature type="mutagenesis site" description="Loss of pre-crRNA cleavage." evidence="1 5">
    <original>H</original>
    <variation>A</variation>
    <location>
        <position position="20"/>
    </location>
</feature>
<feature type="strand" evidence="11">
    <location>
        <begin position="2"/>
        <end position="8"/>
    </location>
</feature>
<feature type="helix" evidence="11">
    <location>
        <begin position="10"/>
        <end position="12"/>
    </location>
</feature>
<feature type="strand" evidence="11">
    <location>
        <begin position="13"/>
        <end position="15"/>
    </location>
</feature>
<feature type="helix" evidence="11">
    <location>
        <begin position="16"/>
        <end position="24"/>
    </location>
</feature>
<feature type="strand" evidence="11">
    <location>
        <begin position="37"/>
        <end position="46"/>
    </location>
</feature>
<feature type="strand" evidence="11">
    <location>
        <begin position="49"/>
        <end position="58"/>
    </location>
</feature>
<feature type="strand" evidence="11">
    <location>
        <begin position="64"/>
        <end position="73"/>
    </location>
</feature>
<feature type="strand" evidence="11">
    <location>
        <begin position="83"/>
        <end position="90"/>
    </location>
</feature>
<feature type="strand" evidence="11">
    <location>
        <begin position="93"/>
        <end position="97"/>
    </location>
</feature>
<feature type="strand" evidence="12">
    <location>
        <begin position="107"/>
        <end position="109"/>
    </location>
</feature>
<feature type="strand" evidence="11">
    <location>
        <begin position="111"/>
        <end position="115"/>
    </location>
</feature>
<feature type="helix" evidence="11">
    <location>
        <begin position="119"/>
        <end position="130"/>
    </location>
</feature>
<feature type="helix" evidence="11">
    <location>
        <begin position="131"/>
        <end position="133"/>
    </location>
</feature>
<feature type="strand" evidence="11">
    <location>
        <begin position="134"/>
        <end position="143"/>
    </location>
</feature>
<feature type="strand" evidence="11">
    <location>
        <begin position="147"/>
        <end position="152"/>
    </location>
</feature>
<feature type="strand" evidence="12">
    <location>
        <begin position="156"/>
        <end position="158"/>
    </location>
</feature>
<feature type="strand" evidence="11">
    <location>
        <begin position="161"/>
        <end position="170"/>
    </location>
</feature>
<feature type="helix" evidence="11">
    <location>
        <begin position="172"/>
        <end position="181"/>
    </location>
</feature>
<feature type="strand" evidence="13">
    <location>
        <begin position="183"/>
        <end position="185"/>
    </location>
</feature>
<feature type="helix" evidence="11">
    <location>
        <begin position="187"/>
        <end position="189"/>
    </location>
</feature>
<feature type="strand" evidence="11">
    <location>
        <begin position="194"/>
        <end position="198"/>
    </location>
</feature>
<reference key="1">
    <citation type="journal article" date="1997" name="Science">
        <title>The complete genome sequence of Escherichia coli K-12.</title>
        <authorList>
            <person name="Blattner F.R."/>
            <person name="Plunkett G. III"/>
            <person name="Bloch C.A."/>
            <person name="Perna N.T."/>
            <person name="Burland V."/>
            <person name="Riley M."/>
            <person name="Collado-Vides J."/>
            <person name="Glasner J.D."/>
            <person name="Rode C.K."/>
            <person name="Mayhew G.F."/>
            <person name="Gregor J."/>
            <person name="Davis N.W."/>
            <person name="Kirkpatrick H.A."/>
            <person name="Goeden M.A."/>
            <person name="Rose D.J."/>
            <person name="Mau B."/>
            <person name="Shao Y."/>
        </authorList>
    </citation>
    <scope>NUCLEOTIDE SEQUENCE [LARGE SCALE GENOMIC DNA]</scope>
    <source>
        <strain>K12 / MG1655 / ATCC 47076</strain>
    </source>
</reference>
<reference key="2">
    <citation type="journal article" date="2006" name="Mol. Syst. Biol.">
        <title>Highly accurate genome sequences of Escherichia coli K-12 strains MG1655 and W3110.</title>
        <authorList>
            <person name="Hayashi K."/>
            <person name="Morooka N."/>
            <person name="Yamamoto Y."/>
            <person name="Fujita K."/>
            <person name="Isono K."/>
            <person name="Choi S."/>
            <person name="Ohtsubo E."/>
            <person name="Baba T."/>
            <person name="Wanner B.L."/>
            <person name="Mori H."/>
            <person name="Horiuchi T."/>
        </authorList>
    </citation>
    <scope>NUCLEOTIDE SEQUENCE [LARGE SCALE GENOMIC DNA]</scope>
    <source>
        <strain>K12 / W3110 / ATCC 27325 / DSM 5911</strain>
    </source>
</reference>
<reference key="3">
    <citation type="journal article" date="2008" name="Science">
        <title>Small CRISPR RNAs guide antiviral defense in prokaryotes.</title>
        <authorList>
            <person name="Brouns S.J."/>
            <person name="Jore M.M."/>
            <person name="Lundgren M."/>
            <person name="Westra E.R."/>
            <person name="Slijkhuis R.J."/>
            <person name="Snijders A.P."/>
            <person name="Dickman M.J."/>
            <person name="Makarova K.S."/>
            <person name="Koonin E.V."/>
            <person name="van der Oost J."/>
        </authorList>
    </citation>
    <scope>FUNCTION AS AN ENDORIBONUCLEASE</scope>
    <scope>SUBUNIT</scope>
    <scope>COFACTOR</scope>
    <scope>DISRUPTION PHENOTYPE</scope>
    <scope>MUTAGENESIS OF HIS-20</scope>
    <source>
        <strain>K12 / W3110 / ATCC 27325 / DSM 5911</strain>
    </source>
</reference>
<reference key="4">
    <citation type="journal article" date="2009" name="J. Bacteriol.">
        <title>Involvement of the leucine response transcription factor LeuO in regulation of the genes for sulfa drug efflux.</title>
        <authorList>
            <person name="Shimada T."/>
            <person name="Yamamoto K."/>
            <person name="Ishihama A."/>
        </authorList>
    </citation>
    <scope>OPERON STRUCTURE</scope>
    <scope>INDUCTION BY LEUO</scope>
    <source>
        <strain>K12 / BW25113</strain>
    </source>
</reference>
<reference key="5">
    <citation type="journal article" date="2010" name="Mol. Microbiol.">
        <title>Identification and characterization of E. coli CRISPR-cas promoters and their silencing by H-NS.</title>
        <authorList>
            <person name="Pul U."/>
            <person name="Wurm R."/>
            <person name="Arslan Z."/>
            <person name="Geissen R."/>
            <person name="Hofmann N."/>
            <person name="Wagner R."/>
        </authorList>
    </citation>
    <scope>INDUCTION BY H-NS</scope>
    <source>
        <strain>K12</strain>
    </source>
</reference>
<reference key="6">
    <citation type="journal article" date="2011" name="Mol. Microbiol.">
        <title>A dual function of the CRISPR-Cas system in bacterial antivirus immunity and DNA repair.</title>
        <authorList>
            <person name="Babu M."/>
            <person name="Beloglazova N."/>
            <person name="Flick R."/>
            <person name="Graham C."/>
            <person name="Skarina T."/>
            <person name="Nocek B."/>
            <person name="Gagarinova A."/>
            <person name="Pogoutse O."/>
            <person name="Brown G."/>
            <person name="Binkowski A."/>
            <person name="Phanse S."/>
            <person name="Joachimiak A."/>
            <person name="Koonin E.V."/>
            <person name="Savchenko A."/>
            <person name="Emili A."/>
            <person name="Greenblatt J."/>
            <person name="Edwards A.M."/>
            <person name="Yakunin A.F."/>
        </authorList>
    </citation>
    <scope>FUNCTION AS AN INHIBITOR OF YGBT (CAS1)</scope>
    <scope>INTERACTION WITH YGBT</scope>
    <source>
        <strain>K12</strain>
    </source>
</reference>
<reference key="7">
    <citation type="journal article" date="2011" name="Mol. Microbiol.">
        <title>Envelope stress is a trigger of CRISPR RNA-mediated DNA silencing in Escherichia coli.</title>
        <authorList>
            <person name="Perez-Rodriguez R."/>
            <person name="Haitjema C."/>
            <person name="Huang Q."/>
            <person name="Nam K.H."/>
            <person name="Bernardis S."/>
            <person name="Ke A."/>
            <person name="DeLisa M.P."/>
        </authorList>
    </citation>
    <scope>FUNCTION AS AN ENDONUCLEASE</scope>
    <scope>ROLE IN PLASMID SILENCING</scope>
    <scope>SUBUNIT</scope>
    <scope>INDUCTION BY BAER</scope>
    <scope>MUTAGENESIS OF HIS-20</scope>
    <scope>DISRUPTION PHENOTYPE</scope>
    <source>
        <strain>K12 / BW25113</strain>
    </source>
</reference>
<reference key="8">
    <citation type="journal article" date="2011" name="Nat. Struct. Mol. Biol.">
        <title>Structural basis for CRISPR RNA-guided DNA recognition by Cascade.</title>
        <authorList>
            <person name="Jore M.M."/>
            <person name="Lundgren M."/>
            <person name="van Duijn E."/>
            <person name="Bultema J.B."/>
            <person name="Westra E.R."/>
            <person name="Waghmare S.P."/>
            <person name="Wiedenheft B."/>
            <person name="Pul U."/>
            <person name="Wurm R."/>
            <person name="Wagner R."/>
            <person name="Beijer M.R."/>
            <person name="Barendregt A."/>
            <person name="Zhou K."/>
            <person name="Snijders A.P."/>
            <person name="Dickman M.J."/>
            <person name="Doudna J.A."/>
            <person name="Boekema E.J."/>
            <person name="Heck A.J."/>
            <person name="van der Oost J."/>
            <person name="Brouns S.J."/>
        </authorList>
    </citation>
    <scope>FUNCTION IN CASCADE</scope>
    <scope>MASS SPECTROMETRY</scope>
    <scope>SUBUNIT</scope>
    <scope>STRUCTURE BY ELECTRON MICROSCOPY</scope>
    <scope>INTERACTION WITH CASA AND CASC</scope>
    <scope>DISRUPTION PHENOTYPE</scope>
    <source>
        <strain>K12</strain>
    </source>
</reference>
<reference key="9">
    <citation type="journal article" date="2011" name="Nature">
        <title>Structures of the RNA-guided surveillance complex from a bacterial immune system.</title>
        <authorList>
            <person name="Wiedenheft B."/>
            <person name="Lander G.C."/>
            <person name="Zhou K."/>
            <person name="Jore M.M."/>
            <person name="Brouns S.J."/>
            <person name="van der Oost J."/>
            <person name="Doudna J.A."/>
            <person name="Nogales E."/>
        </authorList>
    </citation>
    <scope>STRUCTURE BY ELECTRON MICROSCOPY OF CASCADE WITH AND WITHOUT TARGET RNA</scope>
    <scope>RNA-BINDING</scope>
    <scope>INTERACTION WITH CASB AND CASC</scope>
    <source>
        <strain>K12</strain>
    </source>
</reference>
<reference key="10">
    <citation type="journal article" date="2011" name="Biochem. J.">
        <title>Helicase dissociation and annealing of RNA-DNA hybrids by Escherichia coli Cas3 protein.</title>
        <authorList>
            <person name="Howard J.A."/>
            <person name="Delmas S."/>
            <person name="Ivancic-Bace I."/>
            <person name="Bolt E.L."/>
        </authorList>
    </citation>
    <scope>FUNCTION IN R-LOOP FORMATION</scope>
    <scope>SUBUNIT</scope>
    <source>
        <strain>K12 / MG1655 / ATCC 47076</strain>
    </source>
</reference>
<reference key="11">
    <citation type="journal article" date="2012" name="Mol. Cell">
        <title>CRISPR immunity relies on the consecutive binding and degradation of negatively supercoiled invader DNA by Cascade and Cas3.</title>
        <authorList>
            <person name="Westra E.R."/>
            <person name="van Erp P.B."/>
            <person name="Kunne T."/>
            <person name="Wong S.P."/>
            <person name="Staals R.H."/>
            <person name="Seegers C.L."/>
            <person name="Bollen S."/>
            <person name="Jore M.M."/>
            <person name="Semenova E."/>
            <person name="Severinov K."/>
            <person name="de Vos W.M."/>
            <person name="Dame R.T."/>
            <person name="de Vries R."/>
            <person name="Brouns S.J."/>
            <person name="van der Oost J."/>
        </authorList>
    </citation>
    <scope>SUBUNIT</scope>
    <scope>CASCADE DNA-BINDING</scope>
    <source>
        <strain>K12 / MG1655 / ATCC 47076</strain>
    </source>
</reference>
<accession>Q46897</accession>
<accession>Q2MA73</accession>
<sequence>MYLSKVIIARAWSRDLYQLHQGLWHLFPNRPDAARDFLFHVEKRNTPEGCHVLLQSAQMPVSTAVATVIKTKQVEFQLQVGVPLYFRLRANPIKTILDNQKRLDSKGNIKRCRVPLIKEAEQIAWLQRKLGNAARVEDVHPISERPQYFSGDGKSGKIQTVCFEGVLTINDAPALIDLVQQGIGPAKSMGCGLLSLAPL</sequence>
<organism>
    <name type="scientific">Escherichia coli (strain K12)</name>
    <dbReference type="NCBI Taxonomy" id="83333"/>
    <lineage>
        <taxon>Bacteria</taxon>
        <taxon>Pseudomonadati</taxon>
        <taxon>Pseudomonadota</taxon>
        <taxon>Gammaproteobacteria</taxon>
        <taxon>Enterobacterales</taxon>
        <taxon>Enterobacteriaceae</taxon>
        <taxon>Escherichia</taxon>
    </lineage>
</organism>
<protein>
    <recommendedName>
        <fullName>CRISPR system Cascade subunit CasE</fullName>
        <ecNumber>3.1.-.-</ecNumber>
    </recommendedName>
    <alternativeName>
        <fullName>CasE endoRNase</fullName>
    </alternativeName>
    <alternativeName>
        <fullName>crRNA endonuclease</fullName>
    </alternativeName>
</protein>
<evidence type="ECO:0000269" key="1">
    <source>
    </source>
</evidence>
<evidence type="ECO:0000269" key="2">
    <source>
    </source>
</evidence>
<evidence type="ECO:0000269" key="3">
    <source>
    </source>
</evidence>
<evidence type="ECO:0000269" key="4">
    <source>
    </source>
</evidence>
<evidence type="ECO:0000269" key="5">
    <source>
    </source>
</evidence>
<evidence type="ECO:0000269" key="6">
    <source>
    </source>
</evidence>
<evidence type="ECO:0000269" key="7">
    <source>
    </source>
</evidence>
<evidence type="ECO:0000269" key="8">
    <source>
    </source>
</evidence>
<evidence type="ECO:0000269" key="9">
    <source>
    </source>
</evidence>
<evidence type="ECO:0000305" key="10"/>
<evidence type="ECO:0007829" key="11">
    <source>
        <dbReference type="PDB" id="4DZD"/>
    </source>
</evidence>
<evidence type="ECO:0007829" key="12">
    <source>
        <dbReference type="PDB" id="4U7U"/>
    </source>
</evidence>
<evidence type="ECO:0007829" key="13">
    <source>
        <dbReference type="PDB" id="5H9F"/>
    </source>
</evidence>
<dbReference type="EC" id="3.1.-.-"/>
<dbReference type="EMBL" id="U29579">
    <property type="protein sequence ID" value="AAA69266.1"/>
    <property type="molecule type" value="Genomic_DNA"/>
</dbReference>
<dbReference type="EMBL" id="U00096">
    <property type="protein sequence ID" value="AAC75798.1"/>
    <property type="molecule type" value="Genomic_DNA"/>
</dbReference>
<dbReference type="EMBL" id="AP009048">
    <property type="protein sequence ID" value="BAE76833.1"/>
    <property type="molecule type" value="Genomic_DNA"/>
</dbReference>
<dbReference type="PIR" id="H65056">
    <property type="entry name" value="H65056"/>
</dbReference>
<dbReference type="RefSeq" id="NP_417236.1">
    <property type="nucleotide sequence ID" value="NC_000913.3"/>
</dbReference>
<dbReference type="RefSeq" id="WP_000281400.1">
    <property type="nucleotide sequence ID" value="NZ_LN832404.1"/>
</dbReference>
<dbReference type="PDB" id="4DZD">
    <property type="method" value="X-ray"/>
    <property type="resolution" value="2.00 A"/>
    <property type="chains" value="A=1-199"/>
</dbReference>
<dbReference type="PDB" id="4QYZ">
    <property type="method" value="X-ray"/>
    <property type="resolution" value="3.03 A"/>
    <property type="chains" value="K=1-199"/>
</dbReference>
<dbReference type="PDB" id="4TVX">
    <property type="method" value="X-ray"/>
    <property type="resolution" value="3.24 A"/>
    <property type="chains" value="A/M=1-199"/>
</dbReference>
<dbReference type="PDB" id="4U7U">
    <property type="method" value="X-ray"/>
    <property type="resolution" value="3.00 A"/>
    <property type="chains" value="D/P=1-199"/>
</dbReference>
<dbReference type="PDB" id="5CD4">
    <property type="method" value="X-ray"/>
    <property type="resolution" value="3.20 A"/>
    <property type="chains" value="A/M=1-199"/>
</dbReference>
<dbReference type="PDB" id="5H9E">
    <property type="method" value="X-ray"/>
    <property type="resolution" value="3.21 A"/>
    <property type="chains" value="K=1-199"/>
</dbReference>
<dbReference type="PDB" id="5H9F">
    <property type="method" value="X-ray"/>
    <property type="resolution" value="2.45 A"/>
    <property type="chains" value="K=1-199"/>
</dbReference>
<dbReference type="PDBsum" id="4DZD"/>
<dbReference type="PDBsum" id="4QYZ"/>
<dbReference type="PDBsum" id="4TVX"/>
<dbReference type="PDBsum" id="4U7U"/>
<dbReference type="PDBsum" id="5CD4"/>
<dbReference type="PDBsum" id="5H9E"/>
<dbReference type="PDBsum" id="5H9F"/>
<dbReference type="EMDB" id="EMD-5929"/>
<dbReference type="EMDB" id="EMD-5930"/>
<dbReference type="SMR" id="Q46897"/>
<dbReference type="BioGRID" id="4261580">
    <property type="interactions" value="318"/>
</dbReference>
<dbReference type="ComplexPortal" id="CPX-1005">
    <property type="entry name" value="Cascade complex"/>
</dbReference>
<dbReference type="DIP" id="DIP-12124N"/>
<dbReference type="FunCoup" id="Q46897">
    <property type="interactions" value="44"/>
</dbReference>
<dbReference type="IntAct" id="Q46897">
    <property type="interactions" value="5"/>
</dbReference>
<dbReference type="STRING" id="511145.b2756"/>
<dbReference type="PaxDb" id="511145-b2756"/>
<dbReference type="EnsemblBacteria" id="AAC75798">
    <property type="protein sequence ID" value="AAC75798"/>
    <property type="gene ID" value="b2756"/>
</dbReference>
<dbReference type="GeneID" id="947226"/>
<dbReference type="KEGG" id="ecj:JW2726"/>
<dbReference type="KEGG" id="eco:b2756"/>
<dbReference type="KEGG" id="ecoc:C3026_15150"/>
<dbReference type="PATRIC" id="fig|1411691.4.peg.3982"/>
<dbReference type="EchoBASE" id="EB2916"/>
<dbReference type="eggNOG" id="ENOG5032RWI">
    <property type="taxonomic scope" value="Bacteria"/>
</dbReference>
<dbReference type="HOGENOM" id="CLU_080982_0_0_6"/>
<dbReference type="InParanoid" id="Q46897"/>
<dbReference type="OMA" id="TRPFAPM"/>
<dbReference type="OrthoDB" id="9795689at2"/>
<dbReference type="PhylomeDB" id="Q46897"/>
<dbReference type="BioCyc" id="EcoCyc:G7426-MONOMER"/>
<dbReference type="BioCyc" id="MetaCyc:G7426-MONOMER"/>
<dbReference type="EvolutionaryTrace" id="Q46897"/>
<dbReference type="PRO" id="PR:Q46897"/>
<dbReference type="Proteomes" id="UP000000625">
    <property type="component" value="Chromosome"/>
</dbReference>
<dbReference type="GO" id="GO:0032991">
    <property type="term" value="C:protein-containing complex"/>
    <property type="evidence" value="ECO:0000314"/>
    <property type="project" value="EcoCyc"/>
</dbReference>
<dbReference type="GO" id="GO:0003723">
    <property type="term" value="F:RNA binding"/>
    <property type="evidence" value="ECO:0000314"/>
    <property type="project" value="EcoCyc"/>
</dbReference>
<dbReference type="GO" id="GO:0004521">
    <property type="term" value="F:RNA endonuclease activity"/>
    <property type="evidence" value="ECO:0000314"/>
    <property type="project" value="EcoCyc"/>
</dbReference>
<dbReference type="GO" id="GO:0099048">
    <property type="term" value="P:CRISPR-cas system"/>
    <property type="evidence" value="ECO:0000314"/>
    <property type="project" value="ComplexPortal"/>
</dbReference>
<dbReference type="GO" id="GO:0051607">
    <property type="term" value="P:defense response to virus"/>
    <property type="evidence" value="ECO:0000315"/>
    <property type="project" value="EcoCyc"/>
</dbReference>
<dbReference type="GO" id="GO:0006396">
    <property type="term" value="P:RNA processing"/>
    <property type="evidence" value="ECO:0000315"/>
    <property type="project" value="EcoCyc"/>
</dbReference>
<dbReference type="CDD" id="cd09664">
    <property type="entry name" value="Cas6_I-E"/>
    <property type="match status" value="1"/>
</dbReference>
<dbReference type="FunFam" id="3.30.70.1210:FF:000001">
    <property type="entry name" value="CRISPR system Cascade subunit CasE"/>
    <property type="match status" value="1"/>
</dbReference>
<dbReference type="Gene3D" id="3.30.70.1200">
    <property type="entry name" value="Crispr-associated protein, domain 1"/>
    <property type="match status" value="1"/>
</dbReference>
<dbReference type="Gene3D" id="3.30.70.1210">
    <property type="entry name" value="Crispr-associated protein, domain 2"/>
    <property type="match status" value="1"/>
</dbReference>
<dbReference type="InterPro" id="IPR010179">
    <property type="entry name" value="CRISPR-assoc_prot_Cse3"/>
</dbReference>
<dbReference type="NCBIfam" id="TIGR01907">
    <property type="entry name" value="casE_Cse3"/>
    <property type="match status" value="1"/>
</dbReference>
<dbReference type="Pfam" id="PF08798">
    <property type="entry name" value="CRISPR_assoc"/>
    <property type="match status" value="1"/>
</dbReference>
<dbReference type="SMART" id="SM01101">
    <property type="entry name" value="CRISPR_assoc"/>
    <property type="match status" value="1"/>
</dbReference>
<dbReference type="SUPFAM" id="SSF117987">
    <property type="entry name" value="CRISPR-associated protein"/>
    <property type="match status" value="2"/>
</dbReference>
<name>CAS6_ECOLI</name>
<proteinExistence type="evidence at protein level"/>
<keyword id="KW-0002">3D-structure</keyword>
<keyword id="KW-0051">Antiviral defense</keyword>
<keyword id="KW-0255">Endonuclease</keyword>
<keyword id="KW-0378">Hydrolase</keyword>
<keyword id="KW-0540">Nuclease</keyword>
<keyword id="KW-1185">Reference proteome</keyword>
<keyword id="KW-0694">RNA-binding</keyword>
<gene>
    <name type="primary">casE</name>
    <name type="synonym">cas6e</name>
    <name type="synonym">ygcH</name>
    <name type="ordered locus">b2756</name>
    <name type="ordered locus">JW2726</name>
</gene>
<comment type="function">
    <text>CRISPR (clustered regularly interspaced short palindromic repeat), is an adaptive immune system that provides protection against mobile genetic elements (viruses, transposable elements and conjugative plasmids). CRISPR clusters contain sequences complementary to antecedent mobile elements and target invading nucleic acids. CRISPR clusters are transcribed and processed into CRISPR RNA (crRNA).</text>
</comment>
<comment type="function">
    <text>CasE is required to process the pre-crRNA into single repeat-spacer units, with an 8-nt 5'-repeat DNA tag that may help other proteins recognize the crRNA. This subunit alone will cleave pre-crRNA, as will CasCDE or CasCE; cleavage does not require divalent metals or ATP. CasCDE alone is also able to form R-loops. Partially inhibits the cleavage of Holliday junctions by YgbT (Cas1). Yields a 5'-hydroxy group and a 2',3'-cyclic phosphate terminus.</text>
</comment>
<comment type="function">
    <text>A component of Cascade, which participates in CRISPR interference, the third stage of CRISPR immunity. Cascade binds both crRNA and in a sequence-specific manner negatively supercoiled dsDNA target. This leads to the formation of an R-loop in which the crRNA binds the target DNA, displacing the noncomplementary strand. Cas3 is recruited to Cascade, nicks target DNA and then unwinds and cleaves the target, leading to DNA degradation and invader neutralization.</text>
</comment>
<comment type="cofactor">
    <text evidence="1">Does not require a metal cofactor.</text>
</comment>
<comment type="subunit">
    <text evidence="1 4 5 6 7 8 9">Part of the Cascade ribonucleoprotein complex, with stoichiometry CasA(1),CasB(2),CasC(6),CasD(1),CasE(1)-crRNA(1). Interacts directly with crRNA, CasA, CasB and CasC. Stable subcomplexes of CasBCDE-crRNA and CasCDE-crRNA also form, both of which are able to bind target dsDNA, and CasCDE is able to form R-loops. CasCDE and CasCE complexes have endonuclease activity. Interacts with YgbT (Cas1). Binding of target ssRNA or dsDNA causes a conformational change in the Cascade complex.</text>
</comment>
<comment type="induction">
    <text evidence="2 3 5">Repressed by H-NS, activated by LeuO. Activated by the BaeSR two-component regulatory system, possibly due to envelope stress. Part of the casABCDE-ygbT-ygbF operon.</text>
</comment>
<comment type="mass spectrometry"/>
<comment type="disruption phenotype">
    <text evidence="1 5 6">Loss of resistance to bacteriophage lambda infection, loss of plasmid silencing. Decreased levels of crRNA, increased levels of pre-crRNA, prevents pre-crRNA cleavage.</text>
</comment>
<comment type="similarity">
    <text evidence="10">Belongs to the CRISPR-associated protein Cas6/Cse3/CasE family. Subtype I-E/Ecoli subfamily.</text>
</comment>